<sequence>MTSSETTTDHPRTGKCPIDHSKFARSNEANPDAYINGIKKDQQSSSWWNSLWSRNTDVASEPDVAMLHKKPSTVDTHDHPLANPPPGCPMHKASNENSTGFFSNLFGREKQNSEATPAVQPPATCPMSNSNQKPAGVSEVLTGVDSKQQSYVPEGCPVATPKRGWFNWFGNNDDQKQEAYEVDKSNMMYKNIPQTAVDDQVVGLETTRTTSSIPKVDGKNWEYPSPQQMYNAMWRKGYRDSGENVPIMVQVHNFLNEGAWSEIKAWEREAGENTEPKLLRFEGNANKRTPRALWYMMLGRINPNRWGSGEGPFDRHDWYVQRKDNSIVRYVIDYYEAPDSADGKPVFSLDVRPAVDSFESVALRWKHWRAMRQMQQQ</sequence>
<organism>
    <name type="scientific">Schizosaccharomyces pombe (strain 972 / ATCC 24843)</name>
    <name type="common">Fission yeast</name>
    <dbReference type="NCBI Taxonomy" id="284812"/>
    <lineage>
        <taxon>Eukaryota</taxon>
        <taxon>Fungi</taxon>
        <taxon>Dikarya</taxon>
        <taxon>Ascomycota</taxon>
        <taxon>Taphrinomycotina</taxon>
        <taxon>Schizosaccharomycetes</taxon>
        <taxon>Schizosaccharomycetales</taxon>
        <taxon>Schizosaccharomycetaceae</taxon>
        <taxon>Schizosaccharomyces</taxon>
    </lineage>
</organism>
<evidence type="ECO:0000250" key="1">
    <source>
        <dbReference type="UniProtKB" id="P06182"/>
    </source>
</evidence>
<evidence type="ECO:0000256" key="2">
    <source>
        <dbReference type="SAM" id="MobiDB-lite"/>
    </source>
</evidence>
<evidence type="ECO:0000305" key="3"/>
<proteinExistence type="inferred from homology"/>
<feature type="chain" id="PRO_0000121716" description="Putative holocytochrome-c synthase">
    <location>
        <begin position="1"/>
        <end position="377"/>
    </location>
</feature>
<feature type="repeat" description="HRM 1">
    <location>
        <begin position="114"/>
        <end position="119"/>
    </location>
</feature>
<feature type="repeat" description="HRM 2">
    <location>
        <begin position="124"/>
        <end position="129"/>
    </location>
</feature>
<feature type="region of interest" description="Disordered" evidence="2">
    <location>
        <begin position="1"/>
        <end position="29"/>
    </location>
</feature>
<feature type="region of interest" description="Disordered" evidence="2">
    <location>
        <begin position="111"/>
        <end position="136"/>
    </location>
</feature>
<feature type="compositionally biased region" description="Basic and acidic residues" evidence="2">
    <location>
        <begin position="7"/>
        <end position="22"/>
    </location>
</feature>
<protein>
    <recommendedName>
        <fullName evidence="1">Putative holocytochrome-c synthase</fullName>
        <ecNumber evidence="1">4.4.1.17</ecNumber>
    </recommendedName>
    <alternativeName>
        <fullName evidence="1">Cytochrome c heme lyase</fullName>
        <shortName>CCHL</shortName>
    </alternativeName>
</protein>
<accession>O74794</accession>
<gene>
    <name type="ORF">SPBC26H8.12</name>
</gene>
<comment type="function">
    <text evidence="1">Lyase that catalyzes the covalent linking of the heme group to the cytochrome C apoprotein to produce the mature functional cytochrome.</text>
</comment>
<comment type="catalytic activity">
    <reaction evidence="1">
        <text>holo-[cytochrome c] = apo-[cytochrome c] + heme b</text>
        <dbReference type="Rhea" id="RHEA:22648"/>
        <dbReference type="Rhea" id="RHEA-COMP:10725"/>
        <dbReference type="Rhea" id="RHEA-COMP:10726"/>
        <dbReference type="ChEBI" id="CHEBI:29950"/>
        <dbReference type="ChEBI" id="CHEBI:60344"/>
        <dbReference type="ChEBI" id="CHEBI:83739"/>
        <dbReference type="EC" id="4.4.1.17"/>
    </reaction>
    <physiologicalReaction direction="right-to-left" evidence="1">
        <dbReference type="Rhea" id="RHEA:22650"/>
    </physiologicalReaction>
</comment>
<comment type="subcellular location">
    <subcellularLocation>
        <location evidence="1">Mitochondrion inner membrane</location>
    </subcellularLocation>
    <subcellularLocation>
        <location evidence="1">Mitochondrion intermembrane space</location>
    </subcellularLocation>
</comment>
<comment type="similarity">
    <text evidence="3">Belongs to the cytochrome c-type heme lyase family.</text>
</comment>
<reference key="1">
    <citation type="journal article" date="2002" name="Nature">
        <title>The genome sequence of Schizosaccharomyces pombe.</title>
        <authorList>
            <person name="Wood V."/>
            <person name="Gwilliam R."/>
            <person name="Rajandream M.A."/>
            <person name="Lyne M.H."/>
            <person name="Lyne R."/>
            <person name="Stewart A."/>
            <person name="Sgouros J.G."/>
            <person name="Peat N."/>
            <person name="Hayles J."/>
            <person name="Baker S.G."/>
            <person name="Basham D."/>
            <person name="Bowman S."/>
            <person name="Brooks K."/>
            <person name="Brown D."/>
            <person name="Brown S."/>
            <person name="Chillingworth T."/>
            <person name="Churcher C.M."/>
            <person name="Collins M."/>
            <person name="Connor R."/>
            <person name="Cronin A."/>
            <person name="Davis P."/>
            <person name="Feltwell T."/>
            <person name="Fraser A."/>
            <person name="Gentles S."/>
            <person name="Goble A."/>
            <person name="Hamlin N."/>
            <person name="Harris D.E."/>
            <person name="Hidalgo J."/>
            <person name="Hodgson G."/>
            <person name="Holroyd S."/>
            <person name="Hornsby T."/>
            <person name="Howarth S."/>
            <person name="Huckle E.J."/>
            <person name="Hunt S."/>
            <person name="Jagels K."/>
            <person name="James K.D."/>
            <person name="Jones L."/>
            <person name="Jones M."/>
            <person name="Leather S."/>
            <person name="McDonald S."/>
            <person name="McLean J."/>
            <person name="Mooney P."/>
            <person name="Moule S."/>
            <person name="Mungall K.L."/>
            <person name="Murphy L.D."/>
            <person name="Niblett D."/>
            <person name="Odell C."/>
            <person name="Oliver K."/>
            <person name="O'Neil S."/>
            <person name="Pearson D."/>
            <person name="Quail M.A."/>
            <person name="Rabbinowitsch E."/>
            <person name="Rutherford K.M."/>
            <person name="Rutter S."/>
            <person name="Saunders D."/>
            <person name="Seeger K."/>
            <person name="Sharp S."/>
            <person name="Skelton J."/>
            <person name="Simmonds M.N."/>
            <person name="Squares R."/>
            <person name="Squares S."/>
            <person name="Stevens K."/>
            <person name="Taylor K."/>
            <person name="Taylor R.G."/>
            <person name="Tivey A."/>
            <person name="Walsh S.V."/>
            <person name="Warren T."/>
            <person name="Whitehead S."/>
            <person name="Woodward J.R."/>
            <person name="Volckaert G."/>
            <person name="Aert R."/>
            <person name="Robben J."/>
            <person name="Grymonprez B."/>
            <person name="Weltjens I."/>
            <person name="Vanstreels E."/>
            <person name="Rieger M."/>
            <person name="Schaefer M."/>
            <person name="Mueller-Auer S."/>
            <person name="Gabel C."/>
            <person name="Fuchs M."/>
            <person name="Duesterhoeft A."/>
            <person name="Fritzc C."/>
            <person name="Holzer E."/>
            <person name="Moestl D."/>
            <person name="Hilbert H."/>
            <person name="Borzym K."/>
            <person name="Langer I."/>
            <person name="Beck A."/>
            <person name="Lehrach H."/>
            <person name="Reinhardt R."/>
            <person name="Pohl T.M."/>
            <person name="Eger P."/>
            <person name="Zimmermann W."/>
            <person name="Wedler H."/>
            <person name="Wambutt R."/>
            <person name="Purnelle B."/>
            <person name="Goffeau A."/>
            <person name="Cadieu E."/>
            <person name="Dreano S."/>
            <person name="Gloux S."/>
            <person name="Lelaure V."/>
            <person name="Mottier S."/>
            <person name="Galibert F."/>
            <person name="Aves S.J."/>
            <person name="Xiang Z."/>
            <person name="Hunt C."/>
            <person name="Moore K."/>
            <person name="Hurst S.M."/>
            <person name="Lucas M."/>
            <person name="Rochet M."/>
            <person name="Gaillardin C."/>
            <person name="Tallada V.A."/>
            <person name="Garzon A."/>
            <person name="Thode G."/>
            <person name="Daga R.R."/>
            <person name="Cruzado L."/>
            <person name="Jimenez J."/>
            <person name="Sanchez M."/>
            <person name="del Rey F."/>
            <person name="Benito J."/>
            <person name="Dominguez A."/>
            <person name="Revuelta J.L."/>
            <person name="Moreno S."/>
            <person name="Armstrong J."/>
            <person name="Forsburg S.L."/>
            <person name="Cerutti L."/>
            <person name="Lowe T."/>
            <person name="McCombie W.R."/>
            <person name="Paulsen I."/>
            <person name="Potashkin J."/>
            <person name="Shpakovski G.V."/>
            <person name="Ussery D."/>
            <person name="Barrell B.G."/>
            <person name="Nurse P."/>
        </authorList>
    </citation>
    <scope>NUCLEOTIDE SEQUENCE [LARGE SCALE GENOMIC DNA]</scope>
    <source>
        <strain>972 / ATCC 24843</strain>
    </source>
</reference>
<dbReference type="EC" id="4.4.1.17" evidence="1"/>
<dbReference type="EMBL" id="CU329671">
    <property type="protein sequence ID" value="CAA21104.1"/>
    <property type="molecule type" value="Genomic_DNA"/>
</dbReference>
<dbReference type="PIR" id="T40024">
    <property type="entry name" value="T40024"/>
</dbReference>
<dbReference type="FunCoup" id="O74794">
    <property type="interactions" value="214"/>
</dbReference>
<dbReference type="STRING" id="284812.O74794"/>
<dbReference type="PaxDb" id="4896-SPBC26H8.12.1"/>
<dbReference type="EnsemblFungi" id="SPBC26H8.12.1">
    <property type="protein sequence ID" value="SPBC26H8.12.1:pep"/>
    <property type="gene ID" value="SPBC26H8.12"/>
</dbReference>
<dbReference type="KEGG" id="spo:2540445"/>
<dbReference type="PomBase" id="SPBC26H8.12"/>
<dbReference type="VEuPathDB" id="FungiDB:SPBC26H8.12"/>
<dbReference type="eggNOG" id="KOG3996">
    <property type="taxonomic scope" value="Eukaryota"/>
</dbReference>
<dbReference type="HOGENOM" id="CLU_048602_0_0_1"/>
<dbReference type="InParanoid" id="O74794"/>
<dbReference type="PhylomeDB" id="O74794"/>
<dbReference type="PRO" id="PR:O74794"/>
<dbReference type="Proteomes" id="UP000002485">
    <property type="component" value="Chromosome II"/>
</dbReference>
<dbReference type="GO" id="GO:0005743">
    <property type="term" value="C:mitochondrial inner membrane"/>
    <property type="evidence" value="ECO:0007669"/>
    <property type="project" value="UniProtKB-SubCell"/>
</dbReference>
<dbReference type="GO" id="GO:0005758">
    <property type="term" value="C:mitochondrial intermembrane space"/>
    <property type="evidence" value="ECO:0000266"/>
    <property type="project" value="PomBase"/>
</dbReference>
<dbReference type="GO" id="GO:0005739">
    <property type="term" value="C:mitochondrion"/>
    <property type="evidence" value="ECO:0007005"/>
    <property type="project" value="PomBase"/>
</dbReference>
<dbReference type="GO" id="GO:0004408">
    <property type="term" value="F:holocytochrome-c synthase activity"/>
    <property type="evidence" value="ECO:0000318"/>
    <property type="project" value="GO_Central"/>
</dbReference>
<dbReference type="GO" id="GO:0046872">
    <property type="term" value="F:metal ion binding"/>
    <property type="evidence" value="ECO:0007669"/>
    <property type="project" value="UniProtKB-KW"/>
</dbReference>
<dbReference type="GO" id="GO:1903607">
    <property type="term" value="P:cytochrome c biosynthetic process"/>
    <property type="evidence" value="ECO:0000305"/>
    <property type="project" value="PomBase"/>
</dbReference>
<dbReference type="GO" id="GO:0007005">
    <property type="term" value="P:mitochondrion organization"/>
    <property type="evidence" value="ECO:0000305"/>
    <property type="project" value="PomBase"/>
</dbReference>
<dbReference type="InterPro" id="IPR000511">
    <property type="entry name" value="Holocyt_c/c1_synthase"/>
</dbReference>
<dbReference type="PANTHER" id="PTHR12743">
    <property type="entry name" value="CYTOCHROME C1 HEME LYASE"/>
    <property type="match status" value="1"/>
</dbReference>
<dbReference type="PANTHER" id="PTHR12743:SF3">
    <property type="entry name" value="HOLOCYTOCHROME-C SYNTHASE"/>
    <property type="match status" value="1"/>
</dbReference>
<dbReference type="Pfam" id="PF01265">
    <property type="entry name" value="Cyto_heme_lyase"/>
    <property type="match status" value="1"/>
</dbReference>
<dbReference type="PROSITE" id="PS00821">
    <property type="entry name" value="CYTO_HEME_LYASE_1"/>
    <property type="match status" value="1"/>
</dbReference>
<dbReference type="PROSITE" id="PS00822">
    <property type="entry name" value="CYTO_HEME_LYASE_2"/>
    <property type="match status" value="1"/>
</dbReference>
<keyword id="KW-0349">Heme</keyword>
<keyword id="KW-0408">Iron</keyword>
<keyword id="KW-0456">Lyase</keyword>
<keyword id="KW-0472">Membrane</keyword>
<keyword id="KW-0479">Metal-binding</keyword>
<keyword id="KW-0496">Mitochondrion</keyword>
<keyword id="KW-0999">Mitochondrion inner membrane</keyword>
<keyword id="KW-1185">Reference proteome</keyword>
<keyword id="KW-0677">Repeat</keyword>
<name>CCHL_SCHPO</name>